<feature type="chain" id="PRO_0000078764" description="RNA-directed RNA polymerase catalytic subunit">
    <location>
        <begin position="1"/>
        <end position="757"/>
    </location>
</feature>
<feature type="domain" description="RdRp catalytic" evidence="1">
    <location>
        <begin position="286"/>
        <end position="483"/>
    </location>
</feature>
<feature type="region of interest" description="Disordered" evidence="2">
    <location>
        <begin position="50"/>
        <end position="82"/>
    </location>
</feature>
<feature type="region of interest" description="Promoter-binding site" evidence="1">
    <location>
        <begin position="249"/>
        <end position="256"/>
    </location>
</feature>
<feature type="short sequence motif" description="Nuclear localization signal" evidence="1">
    <location>
        <begin position="187"/>
        <end position="195"/>
    </location>
</feature>
<feature type="short sequence motif" description="Nuclear localization signal" evidence="1">
    <location>
        <begin position="203"/>
        <end position="216"/>
    </location>
</feature>
<feature type="compositionally biased region" description="Polar residues" evidence="2">
    <location>
        <begin position="55"/>
        <end position="64"/>
    </location>
</feature>
<feature type="sequence conflict" description="In Ref. 2; AAO46325." ref="2">
    <original>M</original>
    <variation>L</variation>
    <location>
        <position position="155"/>
    </location>
</feature>
<sequence length="757" mass="86440">MDVNPTLLFLKVPAQNAISTTFPYTGDPPYSHGTGTGYTMDTVNRTHQYSEKGKWTTNTETGAPQLNPIDGPLPEDNEPSGYAQTDCVLEAMAFLEESHPGIFENSCLETMEVIQQTRVDKLTQGRQTYDWTLNRNQPAATALANTIEVFRSNGMTANESGRLIDFLKDVIESMDKEEMEITTHFQRKRRVRDNMTKKMVTQRTIGKKKQRLNKRSYLIRALTLNTMTKDAERGKLKRRAIATPGMQIRGFVYFVETLARSICEKLEQSGLPVGGNEKKAKLANVVRKMMTNSQDTELSFTITGDNTKWNENQNPRMFLAMITYITRNQPEWFRNVLSIAPIMFSNKMARLGKGYMFESKSMKLRTQIPAEMLASIDLKYFNESTRKKIEKIRPLLIDGTVSLSPGMMMGMFNMLSTVLGVSILNLGQKKYTKTTYWWDGLQSSDDFALIVNAPNHEGIQAGVDRFYRTCKLVGINMSKKKSYINRTGTFEFTSFFYRYGFVANFSMELPSFGVSGINESADMSIGVTVIKNNMINNDLGPATAQMALQLFIKDYRYTYRCHRGDTQIQTRRSFELKKLWEQTRSKAGLLVSDGGPNLYNIRNLHIPEVCLKWELMDEDYQGRLCNPLNPFVSHKEIESVNNAVVMPAHGPAKSMEYDAVATTHSWIPKRNRSILNTSQRGILEDEQMYQKCCNLFEKFFPSSSYRRPVGISSMVEAMVSRARIDARIDFESGRIKKEEFAEIMKICSTIEELRRQK</sequence>
<protein>
    <recommendedName>
        <fullName evidence="1">RNA-directed RNA polymerase catalytic subunit</fullName>
        <ecNumber evidence="1">2.7.7.48</ecNumber>
    </recommendedName>
    <alternativeName>
        <fullName evidence="1">Polymerase basic protein 1</fullName>
        <shortName evidence="1">PB1</shortName>
    </alternativeName>
    <alternativeName>
        <fullName evidence="1">RNA-directed RNA polymerase subunit P1</fullName>
    </alternativeName>
</protein>
<reference key="1">
    <citation type="journal article" date="1989" name="J. Virol.">
        <title>Avian-to-human transmission of the PB1 gene of influenza A viruses in the 1957 and 1968 pandemics.</title>
        <authorList>
            <person name="Kawaoka Y."/>
            <person name="Krauss S."/>
            <person name="Webster R.G."/>
        </authorList>
    </citation>
    <scope>NUCLEOTIDE SEQUENCE [GENOMIC RNA]</scope>
</reference>
<reference key="2">
    <citation type="journal article" date="2004" name="Virology">
        <title>Genetic analysis of human H2N2 and early H3N2 influenza viruses, 1957-1972: evidence for genetic divergence and multiple reassortment events.</title>
        <authorList>
            <person name="Lindstrom S.E."/>
            <person name="Cox N.J."/>
            <person name="Klimov A."/>
        </authorList>
    </citation>
    <scope>NUCLEOTIDE SEQUENCE [GENOMIC RNA]</scope>
</reference>
<organism>
    <name type="scientific">Influenza A virus (strain A/Singapore/1/1957 H2N2)</name>
    <dbReference type="NCBI Taxonomy" id="382781"/>
    <lineage>
        <taxon>Viruses</taxon>
        <taxon>Riboviria</taxon>
        <taxon>Orthornavirae</taxon>
        <taxon>Negarnaviricota</taxon>
        <taxon>Polyploviricotina</taxon>
        <taxon>Insthoviricetes</taxon>
        <taxon>Articulavirales</taxon>
        <taxon>Orthomyxoviridae</taxon>
        <taxon>Alphainfluenzavirus</taxon>
        <taxon>Alphainfluenzavirus influenzae</taxon>
        <taxon>Influenza A virus</taxon>
    </lineage>
</organism>
<dbReference type="EC" id="2.7.7.48" evidence="1"/>
<dbReference type="EMBL" id="M25924">
    <property type="protein sequence ID" value="AAA43633.1"/>
    <property type="molecule type" value="Genomic_RNA"/>
</dbReference>
<dbReference type="EMBL" id="AY210009">
    <property type="protein sequence ID" value="AAO46325.1"/>
    <property type="molecule type" value="Genomic_RNA"/>
</dbReference>
<dbReference type="SMR" id="P16511"/>
<dbReference type="GO" id="GO:0030430">
    <property type="term" value="C:host cell cytoplasm"/>
    <property type="evidence" value="ECO:0007669"/>
    <property type="project" value="UniProtKB-SubCell"/>
</dbReference>
<dbReference type="GO" id="GO:0042025">
    <property type="term" value="C:host cell nucleus"/>
    <property type="evidence" value="ECO:0007669"/>
    <property type="project" value="UniProtKB-SubCell"/>
</dbReference>
<dbReference type="GO" id="GO:0000166">
    <property type="term" value="F:nucleotide binding"/>
    <property type="evidence" value="ECO:0007669"/>
    <property type="project" value="UniProtKB-UniRule"/>
</dbReference>
<dbReference type="GO" id="GO:0003723">
    <property type="term" value="F:RNA binding"/>
    <property type="evidence" value="ECO:0007669"/>
    <property type="project" value="InterPro"/>
</dbReference>
<dbReference type="GO" id="GO:0003968">
    <property type="term" value="F:RNA-directed RNA polymerase activity"/>
    <property type="evidence" value="ECO:0007669"/>
    <property type="project" value="UniProtKB-UniRule"/>
</dbReference>
<dbReference type="GO" id="GO:0006351">
    <property type="term" value="P:DNA-templated transcription"/>
    <property type="evidence" value="ECO:0007669"/>
    <property type="project" value="UniProtKB-UniRule"/>
</dbReference>
<dbReference type="GO" id="GO:0039657">
    <property type="term" value="P:symbiont-mediated suppression of host gene expression"/>
    <property type="evidence" value="ECO:0007669"/>
    <property type="project" value="UniProtKB-KW"/>
</dbReference>
<dbReference type="GO" id="GO:0039523">
    <property type="term" value="P:symbiont-mediated suppression of host mRNA transcription via inhibition of RNA polymerase II activity"/>
    <property type="evidence" value="ECO:0007669"/>
    <property type="project" value="UniProtKB-UniRule"/>
</dbReference>
<dbReference type="GO" id="GO:0039694">
    <property type="term" value="P:viral RNA genome replication"/>
    <property type="evidence" value="ECO:0007669"/>
    <property type="project" value="UniProtKB-UniRule"/>
</dbReference>
<dbReference type="GO" id="GO:0019083">
    <property type="term" value="P:viral transcription"/>
    <property type="evidence" value="ECO:0007669"/>
    <property type="project" value="UniProtKB-KW"/>
</dbReference>
<dbReference type="Gene3D" id="6.10.140.720">
    <property type="match status" value="1"/>
</dbReference>
<dbReference type="HAMAP" id="MF_04065">
    <property type="entry name" value="INFV_RDRP"/>
    <property type="match status" value="1"/>
</dbReference>
<dbReference type="InterPro" id="IPR007099">
    <property type="entry name" value="RNA-dir_pol_NSvirus"/>
</dbReference>
<dbReference type="InterPro" id="IPR001407">
    <property type="entry name" value="RNA_pol_PB1_influenza"/>
</dbReference>
<dbReference type="Pfam" id="PF00602">
    <property type="entry name" value="Flu_PB1"/>
    <property type="match status" value="1"/>
</dbReference>
<dbReference type="PIRSF" id="PIRSF000827">
    <property type="entry name" value="RdRPol_OMV"/>
    <property type="match status" value="1"/>
</dbReference>
<dbReference type="PROSITE" id="PS50525">
    <property type="entry name" value="RDRP_SSRNA_NEG_SEG"/>
    <property type="match status" value="1"/>
</dbReference>
<organismHost>
    <name type="scientific">Aves</name>
    <dbReference type="NCBI Taxonomy" id="8782"/>
</organismHost>
<organismHost>
    <name type="scientific">Homo sapiens</name>
    <name type="common">Human</name>
    <dbReference type="NCBI Taxonomy" id="9606"/>
</organismHost>
<keyword id="KW-1262">Eukaryotic host gene expression shutoff by virus</keyword>
<keyword id="KW-1191">Eukaryotic host transcription shutoff by virus</keyword>
<keyword id="KW-1035">Host cytoplasm</keyword>
<keyword id="KW-1190">Host gene expression shutoff by virus</keyword>
<keyword id="KW-1048">Host nucleus</keyword>
<keyword id="KW-0945">Host-virus interaction</keyword>
<keyword id="KW-1104">Inhibition of host RNA polymerase II by virus</keyword>
<keyword id="KW-0547">Nucleotide-binding</keyword>
<keyword id="KW-0548">Nucleotidyltransferase</keyword>
<keyword id="KW-0597">Phosphoprotein</keyword>
<keyword id="KW-0696">RNA-directed RNA polymerase</keyword>
<keyword id="KW-0808">Transferase</keyword>
<keyword id="KW-0693">Viral RNA replication</keyword>
<keyword id="KW-1195">Viral transcription</keyword>
<accession>P16511</accession>
<accession>Q6XU32</accession>
<name>RDRP_I57A5</name>
<comment type="function">
    <text evidence="1">RNA-dependent RNA polymerase which is responsible for replication and transcription of virus RNA segments. The transcription of viral mRNAs occurs by a unique mechanism called cap-snatching. 5' methylated caps of cellular mRNAs are cleaved after 10-13 nucleotides by PA. In turn, these short capped RNAs are used as primers by PB1 for transcription of viral mRNAs. During virus replication, PB1 initiates RNA synthesis and copy vRNA into complementary RNA (cRNA) which in turn serves as a template for the production of more vRNAs.</text>
</comment>
<comment type="catalytic activity">
    <reaction evidence="1">
        <text>RNA(n) + a ribonucleoside 5'-triphosphate = RNA(n+1) + diphosphate</text>
        <dbReference type="Rhea" id="RHEA:21248"/>
        <dbReference type="Rhea" id="RHEA-COMP:14527"/>
        <dbReference type="Rhea" id="RHEA-COMP:17342"/>
        <dbReference type="ChEBI" id="CHEBI:33019"/>
        <dbReference type="ChEBI" id="CHEBI:61557"/>
        <dbReference type="ChEBI" id="CHEBI:140395"/>
        <dbReference type="EC" id="2.7.7.48"/>
    </reaction>
</comment>
<comment type="subunit">
    <text evidence="1">Influenza RNA polymerase is composed of three subunits: PB1, PB2 and PA. Interacts (via N-terminus) with PA (via C-terminus). Interacts (via C-terminus) with PB2 (via N-terminus); this interaction is essential for transcription initiation.</text>
</comment>
<comment type="subcellular location">
    <subcellularLocation>
        <location evidence="1">Host nucleus</location>
    </subcellularLocation>
    <subcellularLocation>
        <location evidence="1">Host cytoplasm</location>
    </subcellularLocation>
</comment>
<comment type="PTM">
    <text evidence="1">Phosphorylated by host PRKCA.</text>
</comment>
<comment type="similarity">
    <text evidence="1">Belongs to the influenza viruses polymerase PB1 family.</text>
</comment>
<proteinExistence type="inferred from homology"/>
<evidence type="ECO:0000255" key="1">
    <source>
        <dbReference type="HAMAP-Rule" id="MF_04065"/>
    </source>
</evidence>
<evidence type="ECO:0000256" key="2">
    <source>
        <dbReference type="SAM" id="MobiDB-lite"/>
    </source>
</evidence>
<gene>
    <name evidence="1" type="primary">PB1</name>
</gene>